<feature type="chain" id="PRO_1000085804" description="L-fucose isomerase">
    <location>
        <begin position="1"/>
        <end position="591"/>
    </location>
</feature>
<feature type="active site" description="Proton acceptor" evidence="1">
    <location>
        <position position="337"/>
    </location>
</feature>
<feature type="active site" description="Proton acceptor" evidence="1">
    <location>
        <position position="361"/>
    </location>
</feature>
<feature type="binding site" evidence="1">
    <location>
        <position position="337"/>
    </location>
    <ligand>
        <name>Mn(2+)</name>
        <dbReference type="ChEBI" id="CHEBI:29035"/>
    </ligand>
</feature>
<feature type="binding site" evidence="1">
    <location>
        <position position="361"/>
    </location>
    <ligand>
        <name>Mn(2+)</name>
        <dbReference type="ChEBI" id="CHEBI:29035"/>
    </ligand>
</feature>
<feature type="binding site" evidence="1">
    <location>
        <position position="528"/>
    </location>
    <ligand>
        <name>Mn(2+)</name>
        <dbReference type="ChEBI" id="CHEBI:29035"/>
    </ligand>
</feature>
<keyword id="KW-0119">Carbohydrate metabolism</keyword>
<keyword id="KW-0963">Cytoplasm</keyword>
<keyword id="KW-0294">Fucose metabolism</keyword>
<keyword id="KW-0413">Isomerase</keyword>
<keyword id="KW-0464">Manganese</keyword>
<keyword id="KW-0479">Metal-binding</keyword>
<keyword id="KW-1185">Reference proteome</keyword>
<accession>A9MSA6</accession>
<sequence>MKKISLPKIGIRPVIDGRRMGVRESLEEQTMNMAKATAALIIEKIRHACGAQVECVIADTCIAGMAESAACEEKFSSQNVGVTITVTPCWCYGSETIDMDPMRPKAIWGFNGTERPGAVYLAAALAAHNQKGIPAFSIYGHDVQDADDVSIPADVEEKLLRFARAGLAVASMKGKSYLSVGGVSMGIAGSIVDHNFFESWLGMKVQAVDMTELRRRIDQKIYDEAELEMALAWADKNFRYGEDQNAQQYKRNEAQNRAVLKESLLMAMCIRDMMQGNKTLADKGLVEESLGYNAIAAGFQGQRHWTDQYPNGDTAEALLNSSFDWNGVREPFIVATENDSLNGVAMLFGHQLTGTAQIFADVRTYWSPEAVERVTGQALNGLAEHGIIHLINSGSAALDGACKQRDSEGKPTMKPHWEISQQEADACLAATEWCPAIHEYFRGGGYSSRFLTEGGVPFTMTRVNMIKGLGPVLQIAEGWSVELPKVMHDQLDARTNSTWPTTWFAPRLTGKGPFTDVYSVMANWGANHGVLTIGHVGADFITLAAMLRIPVCMHNVEEAKIYRPSAWAAHGMDVEGQDYRACQNYGPLYKR</sequence>
<gene>
    <name evidence="1" type="primary">fucI</name>
    <name type="ordered locus">SARI_04686</name>
</gene>
<protein>
    <recommendedName>
        <fullName evidence="1">L-fucose isomerase</fullName>
        <ecNumber evidence="1">5.3.1.25</ecNumber>
    </recommendedName>
    <alternativeName>
        <fullName evidence="1">6-deoxy-L-galactose isomerase</fullName>
    </alternativeName>
    <alternativeName>
        <fullName>FucIase</fullName>
    </alternativeName>
</protein>
<name>FUCI_SALAR</name>
<comment type="function">
    <text evidence="1">Converts the aldose L-fucose into the corresponding ketose L-fuculose.</text>
</comment>
<comment type="catalytic activity">
    <reaction evidence="1">
        <text>L-fucose = L-fuculose</text>
        <dbReference type="Rhea" id="RHEA:17233"/>
        <dbReference type="ChEBI" id="CHEBI:2181"/>
        <dbReference type="ChEBI" id="CHEBI:17617"/>
        <dbReference type="EC" id="5.3.1.25"/>
    </reaction>
</comment>
<comment type="cofactor">
    <cofactor evidence="1">
        <name>Mn(2+)</name>
        <dbReference type="ChEBI" id="CHEBI:29035"/>
    </cofactor>
</comment>
<comment type="pathway">
    <text evidence="1">Carbohydrate degradation; L-fucose degradation; L-lactaldehyde and glycerone phosphate from L-fucose: step 1/3.</text>
</comment>
<comment type="subunit">
    <text evidence="1">Homohexamer.</text>
</comment>
<comment type="subcellular location">
    <subcellularLocation>
        <location evidence="1">Cytoplasm</location>
    </subcellularLocation>
</comment>
<comment type="similarity">
    <text evidence="1">Belongs to the L-fucose isomerase family.</text>
</comment>
<dbReference type="EC" id="5.3.1.25" evidence="1"/>
<dbReference type="EMBL" id="CP000880">
    <property type="protein sequence ID" value="ABX24450.1"/>
    <property type="molecule type" value="Genomic_DNA"/>
</dbReference>
<dbReference type="SMR" id="A9MSA6"/>
<dbReference type="STRING" id="41514.SARI_04686"/>
<dbReference type="KEGG" id="ses:SARI_04686"/>
<dbReference type="HOGENOM" id="CLU_033326_1_0_6"/>
<dbReference type="UniPathway" id="UPA00563">
    <property type="reaction ID" value="UER00624"/>
</dbReference>
<dbReference type="Proteomes" id="UP000002084">
    <property type="component" value="Chromosome"/>
</dbReference>
<dbReference type="GO" id="GO:0005737">
    <property type="term" value="C:cytoplasm"/>
    <property type="evidence" value="ECO:0007669"/>
    <property type="project" value="UniProtKB-SubCell"/>
</dbReference>
<dbReference type="GO" id="GO:0008790">
    <property type="term" value="F:arabinose isomerase activity"/>
    <property type="evidence" value="ECO:0007669"/>
    <property type="project" value="TreeGrafter"/>
</dbReference>
<dbReference type="GO" id="GO:0008736">
    <property type="term" value="F:L-fucose isomerase activity"/>
    <property type="evidence" value="ECO:0007669"/>
    <property type="project" value="UniProtKB-UniRule"/>
</dbReference>
<dbReference type="GO" id="GO:0030145">
    <property type="term" value="F:manganese ion binding"/>
    <property type="evidence" value="ECO:0007669"/>
    <property type="project" value="UniProtKB-UniRule"/>
</dbReference>
<dbReference type="GO" id="GO:0019571">
    <property type="term" value="P:D-arabinose catabolic process"/>
    <property type="evidence" value="ECO:0007669"/>
    <property type="project" value="TreeGrafter"/>
</dbReference>
<dbReference type="GO" id="GO:0042355">
    <property type="term" value="P:L-fucose catabolic process"/>
    <property type="evidence" value="ECO:0007669"/>
    <property type="project" value="UniProtKB-UniRule"/>
</dbReference>
<dbReference type="FunFam" id="3.20.14.10:FF:000001">
    <property type="entry name" value="L-fucose isomerase"/>
    <property type="match status" value="1"/>
</dbReference>
<dbReference type="FunFam" id="3.40.275.10:FF:000001">
    <property type="entry name" value="L-fucose isomerase"/>
    <property type="match status" value="1"/>
</dbReference>
<dbReference type="FunFam" id="3.40.50.1070:FF:000001">
    <property type="entry name" value="L-fucose isomerase"/>
    <property type="match status" value="1"/>
</dbReference>
<dbReference type="Gene3D" id="3.40.50.1070">
    <property type="match status" value="1"/>
</dbReference>
<dbReference type="Gene3D" id="3.40.275.10">
    <property type="entry name" value="L-fucose Isomerase, Chain A, domain 2"/>
    <property type="match status" value="1"/>
</dbReference>
<dbReference type="Gene3D" id="3.20.14.10">
    <property type="entry name" value="L-fucose/L-arabinose isomerase, C-terminal"/>
    <property type="match status" value="1"/>
</dbReference>
<dbReference type="HAMAP" id="MF_01254">
    <property type="entry name" value="Fucose_iso"/>
    <property type="match status" value="1"/>
</dbReference>
<dbReference type="InterPro" id="IPR004216">
    <property type="entry name" value="Fuc/Ara_isomerase_C"/>
</dbReference>
<dbReference type="InterPro" id="IPR038393">
    <property type="entry name" value="Fuc_iso_dom3_sf"/>
</dbReference>
<dbReference type="InterPro" id="IPR015888">
    <property type="entry name" value="Fuc_isomerase_C"/>
</dbReference>
<dbReference type="InterPro" id="IPR038391">
    <property type="entry name" value="Fucose_iso_dom1_sf"/>
</dbReference>
<dbReference type="InterPro" id="IPR012888">
    <property type="entry name" value="Fucose_iso_N1"/>
</dbReference>
<dbReference type="InterPro" id="IPR005763">
    <property type="entry name" value="Fucose_isomerase"/>
</dbReference>
<dbReference type="InterPro" id="IPR038392">
    <property type="entry name" value="Fucose_isomerase_dom2_sf"/>
</dbReference>
<dbReference type="InterPro" id="IPR009015">
    <property type="entry name" value="Fucose_isomerase_N/cen_sf"/>
</dbReference>
<dbReference type="InterPro" id="IPR012889">
    <property type="entry name" value="Fucose_isomerase_N2"/>
</dbReference>
<dbReference type="NCBIfam" id="TIGR01089">
    <property type="entry name" value="fucI"/>
    <property type="match status" value="1"/>
</dbReference>
<dbReference type="NCBIfam" id="NF008220">
    <property type="entry name" value="PRK10991.1"/>
    <property type="match status" value="1"/>
</dbReference>
<dbReference type="PANTHER" id="PTHR37840">
    <property type="entry name" value="L-FUCOSE ISOMERASE"/>
    <property type="match status" value="1"/>
</dbReference>
<dbReference type="PANTHER" id="PTHR37840:SF1">
    <property type="entry name" value="L-FUCOSE ISOMERASE"/>
    <property type="match status" value="1"/>
</dbReference>
<dbReference type="Pfam" id="PF02952">
    <property type="entry name" value="Fucose_iso_C"/>
    <property type="match status" value="1"/>
</dbReference>
<dbReference type="Pfam" id="PF07881">
    <property type="entry name" value="Fucose_iso_N1"/>
    <property type="match status" value="1"/>
</dbReference>
<dbReference type="Pfam" id="PF07882">
    <property type="entry name" value="Fucose_iso_N2"/>
    <property type="match status" value="1"/>
</dbReference>
<dbReference type="SUPFAM" id="SSF50443">
    <property type="entry name" value="FucI/AraA C-terminal domain-like"/>
    <property type="match status" value="1"/>
</dbReference>
<dbReference type="SUPFAM" id="SSF53743">
    <property type="entry name" value="FucI/AraA N-terminal and middle domains"/>
    <property type="match status" value="1"/>
</dbReference>
<proteinExistence type="inferred from homology"/>
<evidence type="ECO:0000255" key="1">
    <source>
        <dbReference type="HAMAP-Rule" id="MF_01254"/>
    </source>
</evidence>
<organism>
    <name type="scientific">Salmonella arizonae (strain ATCC BAA-731 / CDC346-86 / RSK2980)</name>
    <dbReference type="NCBI Taxonomy" id="41514"/>
    <lineage>
        <taxon>Bacteria</taxon>
        <taxon>Pseudomonadati</taxon>
        <taxon>Pseudomonadota</taxon>
        <taxon>Gammaproteobacteria</taxon>
        <taxon>Enterobacterales</taxon>
        <taxon>Enterobacteriaceae</taxon>
        <taxon>Salmonella</taxon>
    </lineage>
</organism>
<reference key="1">
    <citation type="submission" date="2007-11" db="EMBL/GenBank/DDBJ databases">
        <authorList>
            <consortium name="The Salmonella enterica serovar Arizonae Genome Sequencing Project"/>
            <person name="McClelland M."/>
            <person name="Sanderson E.K."/>
            <person name="Porwollik S."/>
            <person name="Spieth J."/>
            <person name="Clifton W.S."/>
            <person name="Fulton R."/>
            <person name="Chunyan W."/>
            <person name="Wollam A."/>
            <person name="Shah N."/>
            <person name="Pepin K."/>
            <person name="Bhonagiri V."/>
            <person name="Nash W."/>
            <person name="Johnson M."/>
            <person name="Thiruvilangam P."/>
            <person name="Wilson R."/>
        </authorList>
    </citation>
    <scope>NUCLEOTIDE SEQUENCE [LARGE SCALE GENOMIC DNA]</scope>
    <source>
        <strain>ATCC BAA-731 / CDC346-86 / RSK2980</strain>
    </source>
</reference>